<comment type="function">
    <text evidence="1">Probably functions as a manganese efflux pump.</text>
</comment>
<comment type="subcellular location">
    <subcellularLocation>
        <location evidence="1">Cell membrane</location>
        <topology evidence="1">Multi-pass membrane protein</topology>
    </subcellularLocation>
</comment>
<comment type="similarity">
    <text evidence="1">Belongs to the MntP (TC 9.B.29) family.</text>
</comment>
<name>MNTP_BIFLS</name>
<keyword id="KW-1003">Cell membrane</keyword>
<keyword id="KW-0406">Ion transport</keyword>
<keyword id="KW-0464">Manganese</keyword>
<keyword id="KW-0472">Membrane</keyword>
<keyword id="KW-0812">Transmembrane</keyword>
<keyword id="KW-1133">Transmembrane helix</keyword>
<keyword id="KW-0813">Transport</keyword>
<evidence type="ECO:0000255" key="1">
    <source>
        <dbReference type="HAMAP-Rule" id="MF_01521"/>
    </source>
</evidence>
<proteinExistence type="inferred from homology"/>
<dbReference type="EMBL" id="CP001095">
    <property type="protein sequence ID" value="ACJ51406.1"/>
    <property type="molecule type" value="Genomic_DNA"/>
</dbReference>
<dbReference type="EMBL" id="AP010889">
    <property type="protein sequence ID" value="BAJ67878.1"/>
    <property type="molecule type" value="Genomic_DNA"/>
</dbReference>
<dbReference type="RefSeq" id="WP_012576717.1">
    <property type="nucleotide sequence ID" value="NZ_JDTT01000027.1"/>
</dbReference>
<dbReference type="KEGG" id="bln:Blon_0280"/>
<dbReference type="KEGG" id="blon:BLIJ_0284"/>
<dbReference type="PATRIC" id="fig|391904.8.peg.286"/>
<dbReference type="HOGENOM" id="CLU_096410_3_0_11"/>
<dbReference type="Proteomes" id="UP000001360">
    <property type="component" value="Chromosome"/>
</dbReference>
<dbReference type="GO" id="GO:0005886">
    <property type="term" value="C:plasma membrane"/>
    <property type="evidence" value="ECO:0007669"/>
    <property type="project" value="UniProtKB-SubCell"/>
</dbReference>
<dbReference type="GO" id="GO:0005384">
    <property type="term" value="F:manganese ion transmembrane transporter activity"/>
    <property type="evidence" value="ECO:0007669"/>
    <property type="project" value="UniProtKB-UniRule"/>
</dbReference>
<dbReference type="HAMAP" id="MF_01521">
    <property type="entry name" value="MntP_pump"/>
    <property type="match status" value="1"/>
</dbReference>
<dbReference type="InterPro" id="IPR003810">
    <property type="entry name" value="Mntp/YtaF"/>
</dbReference>
<dbReference type="InterPro" id="IPR022929">
    <property type="entry name" value="Put_MntP"/>
</dbReference>
<dbReference type="PANTHER" id="PTHR35529">
    <property type="entry name" value="MANGANESE EFFLUX PUMP MNTP-RELATED"/>
    <property type="match status" value="1"/>
</dbReference>
<dbReference type="PANTHER" id="PTHR35529:SF1">
    <property type="entry name" value="MANGANESE EFFLUX PUMP MNTP-RELATED"/>
    <property type="match status" value="1"/>
</dbReference>
<dbReference type="Pfam" id="PF02659">
    <property type="entry name" value="Mntp"/>
    <property type="match status" value="1"/>
</dbReference>
<organism>
    <name type="scientific">Bifidobacterium longum subsp. infantis (strain ATCC 15697 / DSM 20088 / JCM 1222 / NCTC 11817 / S12)</name>
    <dbReference type="NCBI Taxonomy" id="391904"/>
    <lineage>
        <taxon>Bacteria</taxon>
        <taxon>Bacillati</taxon>
        <taxon>Actinomycetota</taxon>
        <taxon>Actinomycetes</taxon>
        <taxon>Bifidobacteriales</taxon>
        <taxon>Bifidobacteriaceae</taxon>
        <taxon>Bifidobacterium</taxon>
    </lineage>
</organism>
<reference key="1">
    <citation type="journal article" date="2008" name="Proc. Natl. Acad. Sci. U.S.A.">
        <title>The genome sequence of Bifidobacterium longum subsp. infantis reveals adaptations for milk utilization within the infant microbiome.</title>
        <authorList>
            <person name="Sela D.A."/>
            <person name="Chapman J."/>
            <person name="Adeuya A."/>
            <person name="Kim J.H."/>
            <person name="Chen F."/>
            <person name="Whitehead T.R."/>
            <person name="Lapidus A."/>
            <person name="Rokhsar D.S."/>
            <person name="Lebrilla C.B."/>
            <person name="German J.B."/>
            <person name="Price N.P."/>
            <person name="Richardson P.M."/>
            <person name="Mills D.A."/>
        </authorList>
    </citation>
    <scope>NUCLEOTIDE SEQUENCE [LARGE SCALE GENOMIC DNA]</scope>
    <source>
        <strain>ATCC 15697 / DSM 20088 / JCM 1222 / NCTC 11817 / S12</strain>
    </source>
</reference>
<reference key="2">
    <citation type="journal article" date="2011" name="Nature">
        <title>Bifidobacteria can protect from enteropathogenic infection through production of acetate.</title>
        <authorList>
            <person name="Fukuda S."/>
            <person name="Toh H."/>
            <person name="Hase K."/>
            <person name="Oshima K."/>
            <person name="Nakanishi Y."/>
            <person name="Yoshimura K."/>
            <person name="Tobe T."/>
            <person name="Clarke J.M."/>
            <person name="Topping D.L."/>
            <person name="Suzuki T."/>
            <person name="Taylor T.D."/>
            <person name="Itoh K."/>
            <person name="Kikuchi J."/>
            <person name="Morita H."/>
            <person name="Hattori M."/>
            <person name="Ohno H."/>
        </authorList>
    </citation>
    <scope>NUCLEOTIDE SEQUENCE [LARGE SCALE GENOMIC DNA]</scope>
    <source>
        <strain>ATCC 15697 / DSM 20088 / JCM 1222 / NCTC 11817 / S12</strain>
    </source>
</reference>
<sequence length="192" mass="20288">MIAIIVQTLLISVSVAMDAFAVSIGKGLTVSRVRPGDAVRSALWFGGSQALFLILGHYAASAFSAYVTAFDHWIIFGLLAFIGGNMVHEAYEEDAENAKETAQFDWKHMLPLAVACSIDAFAVGVSLAFMATSVPFAILCISVVTGLFSAAGLYIGRAFGAHWQKPAQIAGGVVLILIGVKVLLEHLGVIAF</sequence>
<feature type="chain" id="PRO_1000185104" description="Putative manganese efflux pump MntP">
    <location>
        <begin position="1"/>
        <end position="192"/>
    </location>
</feature>
<feature type="transmembrane region" description="Helical" evidence="1">
    <location>
        <begin position="2"/>
        <end position="22"/>
    </location>
</feature>
<feature type="transmembrane region" description="Helical" evidence="1">
    <location>
        <begin position="41"/>
        <end position="61"/>
    </location>
</feature>
<feature type="transmembrane region" description="Helical" evidence="1">
    <location>
        <begin position="62"/>
        <end position="82"/>
    </location>
</feature>
<feature type="transmembrane region" description="Helical" evidence="1">
    <location>
        <begin position="109"/>
        <end position="129"/>
    </location>
</feature>
<feature type="transmembrane region" description="Helical" evidence="1">
    <location>
        <begin position="136"/>
        <end position="156"/>
    </location>
</feature>
<feature type="transmembrane region" description="Helical" evidence="1">
    <location>
        <begin position="172"/>
        <end position="192"/>
    </location>
</feature>
<protein>
    <recommendedName>
        <fullName evidence="1">Putative manganese efflux pump MntP</fullName>
    </recommendedName>
</protein>
<accession>B7GTW5</accession>
<accession>E8MP54</accession>
<gene>
    <name evidence="1" type="primary">mntP</name>
    <name type="ordered locus">Blon_0280</name>
    <name type="ordered locus">BLIJ_0284</name>
</gene>